<keyword id="KW-0056">Arginine metabolism</keyword>
<keyword id="KW-0378">Hydrolase</keyword>
<keyword id="KW-0464">Manganese</keyword>
<keyword id="KW-0479">Metal-binding</keyword>
<keyword id="KW-1185">Reference proteome</keyword>
<keyword id="KW-0835">Urea cycle</keyword>
<feature type="chain" id="PRO_0000173700" description="Arginase, non-hepatic 2">
    <location>
        <begin position="1"/>
        <end position="360"/>
    </location>
</feature>
<feature type="binding site" evidence="5">
    <location>
        <position position="122"/>
    </location>
    <ligand>
        <name>Mn(2+)</name>
        <dbReference type="ChEBI" id="CHEBI:29035"/>
        <label>1</label>
    </ligand>
</feature>
<feature type="binding site" evidence="5">
    <location>
        <position position="145"/>
    </location>
    <ligand>
        <name>Mn(2+)</name>
        <dbReference type="ChEBI" id="CHEBI:29035"/>
        <label>1</label>
    </ligand>
</feature>
<feature type="binding site" evidence="5">
    <location>
        <position position="145"/>
    </location>
    <ligand>
        <name>Mn(2+)</name>
        <dbReference type="ChEBI" id="CHEBI:29035"/>
        <label>2</label>
    </ligand>
</feature>
<feature type="binding site" evidence="2">
    <location>
        <begin position="147"/>
        <end position="151"/>
    </location>
    <ligand>
        <name>substrate</name>
    </ligand>
</feature>
<feature type="binding site" evidence="5">
    <location>
        <position position="147"/>
    </location>
    <ligand>
        <name>Mn(2+)</name>
        <dbReference type="ChEBI" id="CHEBI:29035"/>
        <label>2</label>
    </ligand>
</feature>
<feature type="binding site" evidence="5">
    <location>
        <position position="149"/>
    </location>
    <ligand>
        <name>Mn(2+)</name>
        <dbReference type="ChEBI" id="CHEBI:29035"/>
        <label>1</label>
    </ligand>
</feature>
<feature type="binding site" evidence="2">
    <location>
        <begin position="158"/>
        <end position="160"/>
    </location>
    <ligand>
        <name>substrate</name>
    </ligand>
</feature>
<feature type="binding site" evidence="2">
    <location>
        <position position="204"/>
    </location>
    <ligand>
        <name>substrate</name>
    </ligand>
</feature>
<feature type="binding site" evidence="5">
    <location>
        <position position="253"/>
    </location>
    <ligand>
        <name>Mn(2+)</name>
        <dbReference type="ChEBI" id="CHEBI:29035"/>
        <label>1</label>
    </ligand>
</feature>
<feature type="binding site" evidence="5">
    <location>
        <position position="253"/>
    </location>
    <ligand>
        <name>Mn(2+)</name>
        <dbReference type="ChEBI" id="CHEBI:29035"/>
        <label>2</label>
    </ligand>
</feature>
<feature type="binding site" evidence="5">
    <location>
        <position position="255"/>
    </location>
    <ligand>
        <name>Mn(2+)</name>
        <dbReference type="ChEBI" id="CHEBI:29035"/>
        <label>2</label>
    </ligand>
</feature>
<feature type="binding site" evidence="3">
    <location>
        <position position="267"/>
    </location>
    <ligand>
        <name>substrate</name>
    </ligand>
</feature>
<feature type="binding site" evidence="4">
    <location>
        <position position="298"/>
    </location>
    <ligand>
        <name>substrate</name>
    </ligand>
</feature>
<name>ARGN2_XENLA</name>
<proteinExistence type="evidence at transcript level"/>
<accession>Q91554</accession>
<protein>
    <recommendedName>
        <fullName>Arginase, non-hepatic 2</fullName>
        <ecNumber evidence="2">3.5.3.1</ecNumber>
    </recommendedName>
</protein>
<comment type="function">
    <text>As well as its role in the urea cycle, may be involved in tissue remodeling.</text>
</comment>
<comment type="catalytic activity">
    <reaction evidence="2">
        <text>L-arginine + H2O = urea + L-ornithine</text>
        <dbReference type="Rhea" id="RHEA:20569"/>
        <dbReference type="ChEBI" id="CHEBI:15377"/>
        <dbReference type="ChEBI" id="CHEBI:16199"/>
        <dbReference type="ChEBI" id="CHEBI:32682"/>
        <dbReference type="ChEBI" id="CHEBI:46911"/>
        <dbReference type="EC" id="3.5.3.1"/>
    </reaction>
</comment>
<comment type="cofactor">
    <cofactor evidence="5">
        <name>Mn(2+)</name>
        <dbReference type="ChEBI" id="CHEBI:29035"/>
    </cofactor>
    <text evidence="5">Binds 2 manganese ions per subunit.</text>
</comment>
<comment type="pathway">
    <text evidence="2">Nitrogen metabolism; urea cycle; L-ornithine and urea from L-arginine: step 1/1.</text>
</comment>
<comment type="subunit">
    <text evidence="1">Homotrimer.</text>
</comment>
<comment type="tissue specificity">
    <text>Expressed at differing tadpole stages in tail, intestine, hindlimb and trunk region. Strongest in tadpole tail.</text>
</comment>
<comment type="developmental stage">
    <text>First detected in neurula (stage 16/17). Highest levels in whole tadpole found around stage 47/48. In the intestine, increased levels are found during metamorphosis (stages 58-64) and in the hindlimb, expressed at low levels during metamorphosis until stage 66 when levels dramatically increase. In the tail, a constant high level of expression is found throughout metamorphosis.</text>
</comment>
<comment type="induction">
    <text>By thyroid hormone (T3).</text>
</comment>
<comment type="similarity">
    <text evidence="5">Belongs to the arginase family.</text>
</comment>
<evidence type="ECO:0000250" key="1"/>
<evidence type="ECO:0000250" key="2">
    <source>
        <dbReference type="UniProtKB" id="P05089"/>
    </source>
</evidence>
<evidence type="ECO:0000250" key="3">
    <source>
        <dbReference type="UniProtKB" id="P53608"/>
    </source>
</evidence>
<evidence type="ECO:0000250" key="4">
    <source>
        <dbReference type="UniProtKB" id="P78540"/>
    </source>
</evidence>
<evidence type="ECO:0000255" key="5">
    <source>
        <dbReference type="PROSITE-ProRule" id="PRU00742"/>
    </source>
</evidence>
<dbReference type="EC" id="3.5.3.1" evidence="2"/>
<dbReference type="EMBL" id="U08407">
    <property type="protein sequence ID" value="AAA56892.1"/>
    <property type="molecule type" value="mRNA"/>
</dbReference>
<dbReference type="PIR" id="I51664">
    <property type="entry name" value="I51664"/>
</dbReference>
<dbReference type="RefSeq" id="NP_001079511.1">
    <property type="nucleotide sequence ID" value="NM_001086042.1"/>
</dbReference>
<dbReference type="SMR" id="Q91554"/>
<dbReference type="DNASU" id="379198"/>
<dbReference type="GeneID" id="379198"/>
<dbReference type="KEGG" id="xla:379198"/>
<dbReference type="AGR" id="Xenbase:XB-GENE-6251613"/>
<dbReference type="CTD" id="379198"/>
<dbReference type="Xenbase" id="XB-GENE-6251613">
    <property type="gene designation" value="arg2.S"/>
</dbReference>
<dbReference type="OrthoDB" id="9992747at2759"/>
<dbReference type="UniPathway" id="UPA00158">
    <property type="reaction ID" value="UER00270"/>
</dbReference>
<dbReference type="Proteomes" id="UP000186698">
    <property type="component" value="Chromosome 2S"/>
</dbReference>
<dbReference type="Bgee" id="379198">
    <property type="expression patterns" value="Expressed in muscle tissue and 14 other cell types or tissues"/>
</dbReference>
<dbReference type="GO" id="GO:0005737">
    <property type="term" value="C:cytoplasm"/>
    <property type="evidence" value="ECO:0000318"/>
    <property type="project" value="GO_Central"/>
</dbReference>
<dbReference type="GO" id="GO:0005739">
    <property type="term" value="C:mitochondrion"/>
    <property type="evidence" value="ECO:0000318"/>
    <property type="project" value="GO_Central"/>
</dbReference>
<dbReference type="GO" id="GO:0004053">
    <property type="term" value="F:arginase activity"/>
    <property type="evidence" value="ECO:0000318"/>
    <property type="project" value="GO_Central"/>
</dbReference>
<dbReference type="GO" id="GO:0030145">
    <property type="term" value="F:manganese ion binding"/>
    <property type="evidence" value="ECO:0000318"/>
    <property type="project" value="GO_Central"/>
</dbReference>
<dbReference type="GO" id="GO:0019547">
    <property type="term" value="P:arginine catabolic process to ornithine"/>
    <property type="evidence" value="ECO:0000318"/>
    <property type="project" value="GO_Central"/>
</dbReference>
<dbReference type="GO" id="GO:0000050">
    <property type="term" value="P:urea cycle"/>
    <property type="evidence" value="ECO:0007669"/>
    <property type="project" value="UniProtKB-UniPathway"/>
</dbReference>
<dbReference type="CDD" id="cd09989">
    <property type="entry name" value="Arginase"/>
    <property type="match status" value="1"/>
</dbReference>
<dbReference type="FunFam" id="3.40.800.10:FF:000008">
    <property type="entry name" value="Arginase"/>
    <property type="match status" value="1"/>
</dbReference>
<dbReference type="Gene3D" id="3.40.800.10">
    <property type="entry name" value="Ureohydrolase domain"/>
    <property type="match status" value="1"/>
</dbReference>
<dbReference type="InterPro" id="IPR014033">
    <property type="entry name" value="Arginase"/>
</dbReference>
<dbReference type="InterPro" id="IPR006035">
    <property type="entry name" value="Ureohydrolase"/>
</dbReference>
<dbReference type="InterPro" id="IPR023696">
    <property type="entry name" value="Ureohydrolase_dom_sf"/>
</dbReference>
<dbReference type="InterPro" id="IPR020855">
    <property type="entry name" value="Ureohydrolase_Mn_BS"/>
</dbReference>
<dbReference type="NCBIfam" id="TIGR01229">
    <property type="entry name" value="rocF_arginase"/>
    <property type="match status" value="1"/>
</dbReference>
<dbReference type="PANTHER" id="PTHR43782">
    <property type="entry name" value="ARGINASE"/>
    <property type="match status" value="1"/>
</dbReference>
<dbReference type="PANTHER" id="PTHR43782:SF4">
    <property type="entry name" value="ARGINASE-2, MITOCHONDRIAL"/>
    <property type="match status" value="1"/>
</dbReference>
<dbReference type="Pfam" id="PF00491">
    <property type="entry name" value="Arginase"/>
    <property type="match status" value="1"/>
</dbReference>
<dbReference type="PIRSF" id="PIRSF036979">
    <property type="entry name" value="Arginase"/>
    <property type="match status" value="1"/>
</dbReference>
<dbReference type="PRINTS" id="PR00116">
    <property type="entry name" value="ARGINASE"/>
</dbReference>
<dbReference type="SUPFAM" id="SSF52768">
    <property type="entry name" value="Arginase/deacetylase"/>
    <property type="match status" value="1"/>
</dbReference>
<dbReference type="PROSITE" id="PS01053">
    <property type="entry name" value="ARGINASE_1"/>
    <property type="match status" value="1"/>
</dbReference>
<dbReference type="PROSITE" id="PS51409">
    <property type="entry name" value="ARGINASE_2"/>
    <property type="match status" value="1"/>
</dbReference>
<sequence>MSIRSNFVRLLKKQVSIIKLQKKCSHSVAVIGAPFSKGQKRRGVEHGPAAIRSAGLIERLSNLGCNVCDFGDLHFSKVPNDELYNSIVKHPRTVGLACKVLAEEVSKAVGAGHTCVTLGGDHSLAFGSITGHAQQCPDLCVIWVDAHADINTPLTTPSGNLHGQPVSFLLRELQDKVPPIPGFSWAKPCLSKSDIVYIGLRDLDPAEQFILKNYNISYYSMRHIDCMGIKKVMEKTFDQLLGRRDRPIHLSFDIDAFDPALAPATGTPVIGGLTYREGVYITEEIHNTGMLSAVDLVEVNPVLAATSEEVKATANLAVDVIASCFGQTREGAHTRADTIIDVLPTPSTSYESDNEEQVRI</sequence>
<gene>
    <name type="primary">arg2-b</name>
    <name type="synonym">arg2</name>
</gene>
<reference key="1">
    <citation type="journal article" date="1994" name="J. Biol. Chem.">
        <title>Thyroid hormone-dependent differential regulation of multiple arginase genes during amphibian metamorphosis.</title>
        <authorList>
            <person name="Patterton D."/>
            <person name="Shi Y.-B."/>
        </authorList>
    </citation>
    <scope>NUCLEOTIDE SEQUENCE [MRNA]</scope>
    <source>
        <tissue>Intestine</tissue>
    </source>
</reference>
<organism>
    <name type="scientific">Xenopus laevis</name>
    <name type="common">African clawed frog</name>
    <dbReference type="NCBI Taxonomy" id="8355"/>
    <lineage>
        <taxon>Eukaryota</taxon>
        <taxon>Metazoa</taxon>
        <taxon>Chordata</taxon>
        <taxon>Craniata</taxon>
        <taxon>Vertebrata</taxon>
        <taxon>Euteleostomi</taxon>
        <taxon>Amphibia</taxon>
        <taxon>Batrachia</taxon>
        <taxon>Anura</taxon>
        <taxon>Pipoidea</taxon>
        <taxon>Pipidae</taxon>
        <taxon>Xenopodinae</taxon>
        <taxon>Xenopus</taxon>
        <taxon>Xenopus</taxon>
    </lineage>
</organism>